<keyword id="KW-1185">Reference proteome</keyword>
<keyword id="KW-0687">Ribonucleoprotein</keyword>
<keyword id="KW-0689">Ribosomal protein</keyword>
<keyword id="KW-0694">RNA-binding</keyword>
<keyword id="KW-0699">rRNA-binding</keyword>
<organism>
    <name type="scientific">Saccharolobus solfataricus (strain ATCC 35092 / DSM 1617 / JCM 11322 / P2)</name>
    <name type="common">Sulfolobus solfataricus</name>
    <dbReference type="NCBI Taxonomy" id="273057"/>
    <lineage>
        <taxon>Archaea</taxon>
        <taxon>Thermoproteota</taxon>
        <taxon>Thermoprotei</taxon>
        <taxon>Sulfolobales</taxon>
        <taxon>Sulfolobaceae</taxon>
        <taxon>Saccharolobus</taxon>
    </lineage>
</organism>
<dbReference type="EMBL" id="Y18930">
    <property type="protein sequence ID" value="CAB57607.1"/>
    <property type="molecule type" value="Genomic_DNA"/>
</dbReference>
<dbReference type="EMBL" id="AE006641">
    <property type="protein sequence ID" value="AAK40997.1"/>
    <property type="molecule type" value="Genomic_DNA"/>
</dbReference>
<dbReference type="PIR" id="F90217">
    <property type="entry name" value="F90217"/>
</dbReference>
<dbReference type="RefSeq" id="WP_009991250.1">
    <property type="nucleotide sequence ID" value="NC_002754.1"/>
</dbReference>
<dbReference type="SMR" id="Q9UX85"/>
<dbReference type="FunCoup" id="Q9UX85">
    <property type="interactions" value="203"/>
</dbReference>
<dbReference type="STRING" id="273057.SSO0696"/>
<dbReference type="PaxDb" id="273057-SSO0696"/>
<dbReference type="EnsemblBacteria" id="AAK40997">
    <property type="protein sequence ID" value="AAK40997"/>
    <property type="gene ID" value="SSO0696"/>
</dbReference>
<dbReference type="KEGG" id="sso:SSO0696"/>
<dbReference type="PATRIC" id="fig|273057.12.peg.696"/>
<dbReference type="eggNOG" id="arCOG00779">
    <property type="taxonomic scope" value="Archaea"/>
</dbReference>
<dbReference type="HOGENOM" id="CLU_109163_0_0_2"/>
<dbReference type="InParanoid" id="Q9UX85"/>
<dbReference type="PhylomeDB" id="Q9UX85"/>
<dbReference type="Proteomes" id="UP000001974">
    <property type="component" value="Chromosome"/>
</dbReference>
<dbReference type="GO" id="GO:0022625">
    <property type="term" value="C:cytosolic large ribosomal subunit"/>
    <property type="evidence" value="ECO:0000318"/>
    <property type="project" value="GO_Central"/>
</dbReference>
<dbReference type="GO" id="GO:0019843">
    <property type="term" value="F:rRNA binding"/>
    <property type="evidence" value="ECO:0007669"/>
    <property type="project" value="UniProtKB-UniRule"/>
</dbReference>
<dbReference type="GO" id="GO:0003735">
    <property type="term" value="F:structural constituent of ribosome"/>
    <property type="evidence" value="ECO:0000318"/>
    <property type="project" value="GO_Central"/>
</dbReference>
<dbReference type="GO" id="GO:0006412">
    <property type="term" value="P:translation"/>
    <property type="evidence" value="ECO:0007669"/>
    <property type="project" value="UniProtKB-UniRule"/>
</dbReference>
<dbReference type="FunFam" id="4.10.990.10:FF:000001">
    <property type="entry name" value="50S ribosomal protein L15"/>
    <property type="match status" value="1"/>
</dbReference>
<dbReference type="Gene3D" id="3.100.10.10">
    <property type="match status" value="1"/>
</dbReference>
<dbReference type="Gene3D" id="4.10.990.10">
    <property type="match status" value="1"/>
</dbReference>
<dbReference type="HAMAP" id="MF_01341">
    <property type="entry name" value="Ribosomal_uL15"/>
    <property type="match status" value="1"/>
</dbReference>
<dbReference type="InterPro" id="IPR027386">
    <property type="entry name" value="Rbsml_uL15_N"/>
</dbReference>
<dbReference type="InterPro" id="IPR030878">
    <property type="entry name" value="Ribosomal_uL15"/>
</dbReference>
<dbReference type="InterPro" id="IPR021131">
    <property type="entry name" value="Ribosomal_uL15/eL18"/>
</dbReference>
<dbReference type="InterPro" id="IPR036227">
    <property type="entry name" value="Ribosomal_uL15/eL18_sf"/>
</dbReference>
<dbReference type="InterPro" id="IPR001196">
    <property type="entry name" value="Ribosomal_uL15_CS"/>
</dbReference>
<dbReference type="PANTHER" id="PTHR11721">
    <property type="entry name" value="60S RIBOSOMAL PROTEIN L27A"/>
    <property type="match status" value="1"/>
</dbReference>
<dbReference type="PANTHER" id="PTHR11721:SF3">
    <property type="entry name" value="LARGE RIBOSOMAL SUBUNIT PROTEIN UL15"/>
    <property type="match status" value="1"/>
</dbReference>
<dbReference type="Pfam" id="PF00828">
    <property type="entry name" value="Ribosomal_L27A"/>
    <property type="match status" value="1"/>
</dbReference>
<dbReference type="SUPFAM" id="SSF52080">
    <property type="entry name" value="Ribosomal proteins L15p and L18e"/>
    <property type="match status" value="1"/>
</dbReference>
<dbReference type="PROSITE" id="PS00475">
    <property type="entry name" value="RIBOSOMAL_L15"/>
    <property type="match status" value="1"/>
</dbReference>
<proteinExistence type="inferred from homology"/>
<comment type="function">
    <text evidence="1">Binds to the 23S rRNA.</text>
</comment>
<comment type="subunit">
    <text evidence="1">Part of the 50S ribosomal subunit.</text>
</comment>
<comment type="similarity">
    <text evidence="1">Belongs to the universal ribosomal protein uL15 family.</text>
</comment>
<accession>Q9UX85</accession>
<evidence type="ECO:0000255" key="1">
    <source>
        <dbReference type="HAMAP-Rule" id="MF_01341"/>
    </source>
</evidence>
<evidence type="ECO:0000256" key="2">
    <source>
        <dbReference type="SAM" id="MobiDB-lite"/>
    </source>
</evidence>
<evidence type="ECO:0000305" key="3"/>
<gene>
    <name evidence="1" type="primary">rpl15</name>
    <name type="synonym">rpl15Ab</name>
    <name type="ordered locus">SSO0696</name>
    <name type="ORF">C10_034</name>
</gene>
<feature type="chain" id="PRO_0000104875" description="Large ribosomal subunit protein uL15">
    <location>
        <begin position="1"/>
        <end position="144"/>
    </location>
</feature>
<feature type="region of interest" description="Disordered" evidence="2">
    <location>
        <begin position="1"/>
        <end position="35"/>
    </location>
</feature>
<feature type="compositionally biased region" description="Basic residues" evidence="2">
    <location>
        <begin position="1"/>
        <end position="14"/>
    </location>
</feature>
<protein>
    <recommendedName>
        <fullName evidence="1">Large ribosomal subunit protein uL15</fullName>
    </recommendedName>
    <alternativeName>
        <fullName evidence="3">50S ribosomal protein L15</fullName>
    </alternativeName>
</protein>
<sequence>MVVRREKKSRKMRGSRTMGWGIRGQHRDRGSQGGRQIGMHKEKWSWLVKYGKGWYGKHGFRNPTTKLTSAISLRKLNELLESGYIKIKEMDGKKIVDLNELGYNKLLGGGSISIPVTIKVGKATNKAIQKVKEMGGEVILSPTE</sequence>
<reference key="1">
    <citation type="journal article" date="2000" name="Genome">
        <title>Gene content and organization of a 281-kbp contig from the genome of the extremely thermophilic archaeon, Sulfolobus solfataricus P2.</title>
        <authorList>
            <person name="Charlebois R.L."/>
            <person name="Singh R.K."/>
            <person name="Chan-Weiher C.C.-Y."/>
            <person name="Allard G."/>
            <person name="Chow C."/>
            <person name="Confalonieri F."/>
            <person name="Curtis B."/>
            <person name="Duguet M."/>
            <person name="Erauso G."/>
            <person name="Faguy D."/>
            <person name="Gaasterland T."/>
            <person name="Garrett R.A."/>
            <person name="Gordon P."/>
            <person name="Jeffries A.C."/>
            <person name="Kozera C."/>
            <person name="Kushwaha N."/>
            <person name="Lafleur E."/>
            <person name="Medina N."/>
            <person name="Peng X."/>
            <person name="Penny S.L."/>
            <person name="She Q."/>
            <person name="St Jean A."/>
            <person name="van der Oost J."/>
            <person name="Young F."/>
            <person name="Zivanovic Y."/>
            <person name="Doolittle W.F."/>
            <person name="Ragan M.A."/>
            <person name="Sensen C.W."/>
        </authorList>
    </citation>
    <scope>NUCLEOTIDE SEQUENCE [LARGE SCALE GENOMIC DNA]</scope>
    <source>
        <strain>ATCC 35092 / DSM 1617 / JCM 11322 / P2</strain>
    </source>
</reference>
<reference key="2">
    <citation type="journal article" date="2001" name="Proc. Natl. Acad. Sci. U.S.A.">
        <title>The complete genome of the crenarchaeon Sulfolobus solfataricus P2.</title>
        <authorList>
            <person name="She Q."/>
            <person name="Singh R.K."/>
            <person name="Confalonieri F."/>
            <person name="Zivanovic Y."/>
            <person name="Allard G."/>
            <person name="Awayez M.J."/>
            <person name="Chan-Weiher C.C.-Y."/>
            <person name="Clausen I.G."/>
            <person name="Curtis B.A."/>
            <person name="De Moors A."/>
            <person name="Erauso G."/>
            <person name="Fletcher C."/>
            <person name="Gordon P.M.K."/>
            <person name="Heikamp-de Jong I."/>
            <person name="Jeffries A.C."/>
            <person name="Kozera C.J."/>
            <person name="Medina N."/>
            <person name="Peng X."/>
            <person name="Thi-Ngoc H.P."/>
            <person name="Redder P."/>
            <person name="Schenk M.E."/>
            <person name="Theriault C."/>
            <person name="Tolstrup N."/>
            <person name="Charlebois R.L."/>
            <person name="Doolittle W.F."/>
            <person name="Duguet M."/>
            <person name="Gaasterland T."/>
            <person name="Garrett R.A."/>
            <person name="Ragan M.A."/>
            <person name="Sensen C.W."/>
            <person name="Van der Oost J."/>
        </authorList>
    </citation>
    <scope>NUCLEOTIDE SEQUENCE [LARGE SCALE GENOMIC DNA]</scope>
    <source>
        <strain>ATCC 35092 / DSM 1617 / JCM 11322 / P2</strain>
    </source>
</reference>
<name>RL15_SACS2</name>